<comment type="function">
    <text evidence="1">Involved in protein export. Acts as a chaperone by maintaining the newly synthesized protein in an open conformation. Functions as a peptidyl-prolyl cis-trans isomerase.</text>
</comment>
<comment type="catalytic activity">
    <reaction evidence="1">
        <text>[protein]-peptidylproline (omega=180) = [protein]-peptidylproline (omega=0)</text>
        <dbReference type="Rhea" id="RHEA:16237"/>
        <dbReference type="Rhea" id="RHEA-COMP:10747"/>
        <dbReference type="Rhea" id="RHEA-COMP:10748"/>
        <dbReference type="ChEBI" id="CHEBI:83833"/>
        <dbReference type="ChEBI" id="CHEBI:83834"/>
        <dbReference type="EC" id="5.2.1.8"/>
    </reaction>
</comment>
<comment type="subcellular location">
    <subcellularLocation>
        <location>Cytoplasm</location>
    </subcellularLocation>
    <text evidence="1">About half TF is bound to the ribosome near the polypeptide exit tunnel while the other half is free in the cytoplasm.</text>
</comment>
<comment type="domain">
    <text evidence="1">Consists of 3 domains; the N-terminus binds the ribosome, the middle domain has PPIase activity, while the C-terminus has intrinsic chaperone activity on its own.</text>
</comment>
<comment type="similarity">
    <text evidence="1">Belongs to the FKBP-type PPIase family. Tig subfamily.</text>
</comment>
<reference key="1">
    <citation type="journal article" date="2006" name="J. Bacteriol.">
        <title>Pathogenomic sequence analysis of Bacillus cereus and Bacillus thuringiensis isolates closely related to Bacillus anthracis.</title>
        <authorList>
            <person name="Han C.S."/>
            <person name="Xie G."/>
            <person name="Challacombe J.F."/>
            <person name="Altherr M.R."/>
            <person name="Bhotika S.S."/>
            <person name="Bruce D."/>
            <person name="Campbell C.S."/>
            <person name="Campbell M.L."/>
            <person name="Chen J."/>
            <person name="Chertkov O."/>
            <person name="Cleland C."/>
            <person name="Dimitrijevic M."/>
            <person name="Doggett N.A."/>
            <person name="Fawcett J.J."/>
            <person name="Glavina T."/>
            <person name="Goodwin L.A."/>
            <person name="Hill K.K."/>
            <person name="Hitchcock P."/>
            <person name="Jackson P.J."/>
            <person name="Keim P."/>
            <person name="Kewalramani A.R."/>
            <person name="Longmire J."/>
            <person name="Lucas S."/>
            <person name="Malfatti S."/>
            <person name="McMurry K."/>
            <person name="Meincke L.J."/>
            <person name="Misra M."/>
            <person name="Moseman B.L."/>
            <person name="Mundt M."/>
            <person name="Munk A.C."/>
            <person name="Okinaka R.T."/>
            <person name="Parson-Quintana B."/>
            <person name="Reilly L.P."/>
            <person name="Richardson P."/>
            <person name="Robinson D.L."/>
            <person name="Rubin E."/>
            <person name="Saunders E."/>
            <person name="Tapia R."/>
            <person name="Tesmer J.G."/>
            <person name="Thayer N."/>
            <person name="Thompson L.S."/>
            <person name="Tice H."/>
            <person name="Ticknor L.O."/>
            <person name="Wills P.L."/>
            <person name="Brettin T.S."/>
            <person name="Gilna P."/>
        </authorList>
    </citation>
    <scope>NUCLEOTIDE SEQUENCE [LARGE SCALE GENOMIC DNA]</scope>
    <source>
        <strain>ZK / E33L</strain>
    </source>
</reference>
<keyword id="KW-0131">Cell cycle</keyword>
<keyword id="KW-0132">Cell division</keyword>
<keyword id="KW-0143">Chaperone</keyword>
<keyword id="KW-0963">Cytoplasm</keyword>
<keyword id="KW-0413">Isomerase</keyword>
<keyword id="KW-0697">Rotamase</keyword>
<feature type="chain" id="PRO_0000179308" description="Trigger factor">
    <location>
        <begin position="1"/>
        <end position="425"/>
    </location>
</feature>
<feature type="domain" description="PPIase FKBP-type" evidence="1">
    <location>
        <begin position="163"/>
        <end position="248"/>
    </location>
</feature>
<dbReference type="EC" id="5.2.1.8" evidence="1"/>
<dbReference type="EMBL" id="CP000001">
    <property type="protein sequence ID" value="AAU16052.1"/>
    <property type="molecule type" value="Genomic_DNA"/>
</dbReference>
<dbReference type="RefSeq" id="WP_000729253.1">
    <property type="nucleotide sequence ID" value="NZ_CP009968.1"/>
</dbReference>
<dbReference type="SMR" id="Q633X1"/>
<dbReference type="GeneID" id="45024345"/>
<dbReference type="KEGG" id="bcz:BCE33L4217"/>
<dbReference type="PATRIC" id="fig|288681.22.peg.1166"/>
<dbReference type="Proteomes" id="UP000002612">
    <property type="component" value="Chromosome"/>
</dbReference>
<dbReference type="GO" id="GO:0005737">
    <property type="term" value="C:cytoplasm"/>
    <property type="evidence" value="ECO:0007669"/>
    <property type="project" value="UniProtKB-SubCell"/>
</dbReference>
<dbReference type="GO" id="GO:0003755">
    <property type="term" value="F:peptidyl-prolyl cis-trans isomerase activity"/>
    <property type="evidence" value="ECO:0007669"/>
    <property type="project" value="UniProtKB-UniRule"/>
</dbReference>
<dbReference type="GO" id="GO:0044183">
    <property type="term" value="F:protein folding chaperone"/>
    <property type="evidence" value="ECO:0007669"/>
    <property type="project" value="TreeGrafter"/>
</dbReference>
<dbReference type="GO" id="GO:0043022">
    <property type="term" value="F:ribosome binding"/>
    <property type="evidence" value="ECO:0007669"/>
    <property type="project" value="TreeGrafter"/>
</dbReference>
<dbReference type="GO" id="GO:0051083">
    <property type="term" value="P:'de novo' cotranslational protein folding"/>
    <property type="evidence" value="ECO:0007669"/>
    <property type="project" value="TreeGrafter"/>
</dbReference>
<dbReference type="GO" id="GO:0051301">
    <property type="term" value="P:cell division"/>
    <property type="evidence" value="ECO:0007669"/>
    <property type="project" value="UniProtKB-KW"/>
</dbReference>
<dbReference type="GO" id="GO:0061077">
    <property type="term" value="P:chaperone-mediated protein folding"/>
    <property type="evidence" value="ECO:0007669"/>
    <property type="project" value="TreeGrafter"/>
</dbReference>
<dbReference type="GO" id="GO:0015031">
    <property type="term" value="P:protein transport"/>
    <property type="evidence" value="ECO:0007669"/>
    <property type="project" value="UniProtKB-UniRule"/>
</dbReference>
<dbReference type="GO" id="GO:0043335">
    <property type="term" value="P:protein unfolding"/>
    <property type="evidence" value="ECO:0007669"/>
    <property type="project" value="TreeGrafter"/>
</dbReference>
<dbReference type="FunFam" id="3.10.50.40:FF:000001">
    <property type="entry name" value="Trigger factor"/>
    <property type="match status" value="1"/>
</dbReference>
<dbReference type="FunFam" id="3.30.70.1050:FF:000002">
    <property type="entry name" value="Trigger factor"/>
    <property type="match status" value="1"/>
</dbReference>
<dbReference type="Gene3D" id="3.10.50.40">
    <property type="match status" value="1"/>
</dbReference>
<dbReference type="Gene3D" id="3.30.70.1050">
    <property type="entry name" value="Trigger factor ribosome-binding domain"/>
    <property type="match status" value="1"/>
</dbReference>
<dbReference type="Gene3D" id="1.10.3120.10">
    <property type="entry name" value="Trigger factor, C-terminal domain"/>
    <property type="match status" value="1"/>
</dbReference>
<dbReference type="HAMAP" id="MF_00303">
    <property type="entry name" value="Trigger_factor_Tig"/>
    <property type="match status" value="1"/>
</dbReference>
<dbReference type="InterPro" id="IPR046357">
    <property type="entry name" value="PPIase_dom_sf"/>
</dbReference>
<dbReference type="InterPro" id="IPR001179">
    <property type="entry name" value="PPIase_FKBP_dom"/>
</dbReference>
<dbReference type="InterPro" id="IPR005215">
    <property type="entry name" value="Trig_fac"/>
</dbReference>
<dbReference type="InterPro" id="IPR008880">
    <property type="entry name" value="Trigger_fac_C"/>
</dbReference>
<dbReference type="InterPro" id="IPR037041">
    <property type="entry name" value="Trigger_fac_C_sf"/>
</dbReference>
<dbReference type="InterPro" id="IPR008881">
    <property type="entry name" value="Trigger_fac_ribosome-bd_bac"/>
</dbReference>
<dbReference type="InterPro" id="IPR036611">
    <property type="entry name" value="Trigger_fac_ribosome-bd_sf"/>
</dbReference>
<dbReference type="InterPro" id="IPR027304">
    <property type="entry name" value="Trigger_fact/SurA_dom_sf"/>
</dbReference>
<dbReference type="NCBIfam" id="TIGR00115">
    <property type="entry name" value="tig"/>
    <property type="match status" value="1"/>
</dbReference>
<dbReference type="PANTHER" id="PTHR30560">
    <property type="entry name" value="TRIGGER FACTOR CHAPERONE AND PEPTIDYL-PROLYL CIS/TRANS ISOMERASE"/>
    <property type="match status" value="1"/>
</dbReference>
<dbReference type="PANTHER" id="PTHR30560:SF3">
    <property type="entry name" value="TRIGGER FACTOR-LIKE PROTEIN TIG, CHLOROPLASTIC"/>
    <property type="match status" value="1"/>
</dbReference>
<dbReference type="Pfam" id="PF00254">
    <property type="entry name" value="FKBP_C"/>
    <property type="match status" value="1"/>
</dbReference>
<dbReference type="Pfam" id="PF05698">
    <property type="entry name" value="Trigger_C"/>
    <property type="match status" value="1"/>
</dbReference>
<dbReference type="Pfam" id="PF05697">
    <property type="entry name" value="Trigger_N"/>
    <property type="match status" value="1"/>
</dbReference>
<dbReference type="PIRSF" id="PIRSF003095">
    <property type="entry name" value="Trigger_factor"/>
    <property type="match status" value="1"/>
</dbReference>
<dbReference type="SUPFAM" id="SSF54534">
    <property type="entry name" value="FKBP-like"/>
    <property type="match status" value="1"/>
</dbReference>
<dbReference type="SUPFAM" id="SSF109998">
    <property type="entry name" value="Triger factor/SurA peptide-binding domain-like"/>
    <property type="match status" value="1"/>
</dbReference>
<dbReference type="SUPFAM" id="SSF102735">
    <property type="entry name" value="Trigger factor ribosome-binding domain"/>
    <property type="match status" value="1"/>
</dbReference>
<dbReference type="PROSITE" id="PS50059">
    <property type="entry name" value="FKBP_PPIASE"/>
    <property type="match status" value="1"/>
</dbReference>
<proteinExistence type="inferred from homology"/>
<sequence>MAAKWEKLEGNVGVLTIEVDAKEVNNSIDAAFKKVVKTINVPGFRKGKMPRPLFEQRFGIESLYQDALDIILPKAYGEAIDEAGIFPVAHPEIDIEKFEKNANLIFTAKVTVKPEVKLGEYKGLAVEKVETTVTDEDVENELKSLQERQAELVVKEEGTVENGDTAVIDFEGFVDGEAFEGGKGENYSLAIGSGTFIPGFEEQVIGLKSGESKDVEVSFPEEYHAAELAGKPATFKVTVHEIKTKELPELNDEFAKEADEAVATLDELKAKLRTNLEEGKKHEAEHKVRDEVVELAAANAEIDIPEAMIDTELDRMVREFEQRLSQQGMNLELYYQFTGTDADKLKEQMKEDAQKRVRINLVLEAIIEAENIEVTEEEVTAEVEKMAEMYGMPVDAIKQALGSVDALAEDLKVRKAVDFLVENAA</sequence>
<gene>
    <name evidence="1" type="primary">tig</name>
    <name type="ordered locus">BCE33L4217</name>
</gene>
<evidence type="ECO:0000255" key="1">
    <source>
        <dbReference type="HAMAP-Rule" id="MF_00303"/>
    </source>
</evidence>
<protein>
    <recommendedName>
        <fullName evidence="1">Trigger factor</fullName>
        <shortName evidence="1">TF</shortName>
        <ecNumber evidence="1">5.2.1.8</ecNumber>
    </recommendedName>
    <alternativeName>
        <fullName evidence="1">PPIase</fullName>
    </alternativeName>
</protein>
<accession>Q633X1</accession>
<organism>
    <name type="scientific">Bacillus cereus (strain ZK / E33L)</name>
    <dbReference type="NCBI Taxonomy" id="288681"/>
    <lineage>
        <taxon>Bacteria</taxon>
        <taxon>Bacillati</taxon>
        <taxon>Bacillota</taxon>
        <taxon>Bacilli</taxon>
        <taxon>Bacillales</taxon>
        <taxon>Bacillaceae</taxon>
        <taxon>Bacillus</taxon>
        <taxon>Bacillus cereus group</taxon>
    </lineage>
</organism>
<name>TIG_BACCZ</name>